<accession>Q8JGR7</accession>
<accession>Q7ZTZ9</accession>
<reference key="1">
    <citation type="journal article" date="2002" name="Nat. Genet.">
        <title>Insertional mutagenesis in zebrafish rapidly identifies genes essential for early vertebrate development.</title>
        <authorList>
            <person name="Golling G."/>
            <person name="Amsterdam A."/>
            <person name="Sun Z."/>
            <person name="Antonelli M."/>
            <person name="Maldonado E."/>
            <person name="Chen W."/>
            <person name="Burgess S."/>
            <person name="Haldi M."/>
            <person name="Artzt K."/>
            <person name="Farrington S."/>
            <person name="Lin S.-Y."/>
            <person name="Nissen R.M."/>
            <person name="Hopkins N."/>
        </authorList>
    </citation>
    <scope>NUCLEOTIDE SEQUENCE [LARGE SCALE MRNA] (ISOFORM 1)</scope>
    <scope>FUNCTION</scope>
    <scope>DISRUPTION PHENOTYPE</scope>
    <source>
        <tissue>Embryo</tissue>
    </source>
</reference>
<reference key="2">
    <citation type="journal article" date="2013" name="Nature">
        <title>The zebrafish reference genome sequence and its relationship to the human genome.</title>
        <authorList>
            <person name="Howe K."/>
            <person name="Clark M.D."/>
            <person name="Torroja C.F."/>
            <person name="Torrance J."/>
            <person name="Berthelot C."/>
            <person name="Muffato M."/>
            <person name="Collins J.E."/>
            <person name="Humphray S."/>
            <person name="McLaren K."/>
            <person name="Matthews L."/>
            <person name="McLaren S."/>
            <person name="Sealy I."/>
            <person name="Caccamo M."/>
            <person name="Churcher C."/>
            <person name="Scott C."/>
            <person name="Barrett J.C."/>
            <person name="Koch R."/>
            <person name="Rauch G.J."/>
            <person name="White S."/>
            <person name="Chow W."/>
            <person name="Kilian B."/>
            <person name="Quintais L.T."/>
            <person name="Guerra-Assuncao J.A."/>
            <person name="Zhou Y."/>
            <person name="Gu Y."/>
            <person name="Yen J."/>
            <person name="Vogel J.H."/>
            <person name="Eyre T."/>
            <person name="Redmond S."/>
            <person name="Banerjee R."/>
            <person name="Chi J."/>
            <person name="Fu B."/>
            <person name="Langley E."/>
            <person name="Maguire S.F."/>
            <person name="Laird G.K."/>
            <person name="Lloyd D."/>
            <person name="Kenyon E."/>
            <person name="Donaldson S."/>
            <person name="Sehra H."/>
            <person name="Almeida-King J."/>
            <person name="Loveland J."/>
            <person name="Trevanion S."/>
            <person name="Jones M."/>
            <person name="Quail M."/>
            <person name="Willey D."/>
            <person name="Hunt A."/>
            <person name="Burton J."/>
            <person name="Sims S."/>
            <person name="McLay K."/>
            <person name="Plumb B."/>
            <person name="Davis J."/>
            <person name="Clee C."/>
            <person name="Oliver K."/>
            <person name="Clark R."/>
            <person name="Riddle C."/>
            <person name="Elliot D."/>
            <person name="Threadgold G."/>
            <person name="Harden G."/>
            <person name="Ware D."/>
            <person name="Begum S."/>
            <person name="Mortimore B."/>
            <person name="Kerry G."/>
            <person name="Heath P."/>
            <person name="Phillimore B."/>
            <person name="Tracey A."/>
            <person name="Corby N."/>
            <person name="Dunn M."/>
            <person name="Johnson C."/>
            <person name="Wood J."/>
            <person name="Clark S."/>
            <person name="Pelan S."/>
            <person name="Griffiths G."/>
            <person name="Smith M."/>
            <person name="Glithero R."/>
            <person name="Howden P."/>
            <person name="Barker N."/>
            <person name="Lloyd C."/>
            <person name="Stevens C."/>
            <person name="Harley J."/>
            <person name="Holt K."/>
            <person name="Panagiotidis G."/>
            <person name="Lovell J."/>
            <person name="Beasley H."/>
            <person name="Henderson C."/>
            <person name="Gordon D."/>
            <person name="Auger K."/>
            <person name="Wright D."/>
            <person name="Collins J."/>
            <person name="Raisen C."/>
            <person name="Dyer L."/>
            <person name="Leung K."/>
            <person name="Robertson L."/>
            <person name="Ambridge K."/>
            <person name="Leongamornlert D."/>
            <person name="McGuire S."/>
            <person name="Gilderthorp R."/>
            <person name="Griffiths C."/>
            <person name="Manthravadi D."/>
            <person name="Nichol S."/>
            <person name="Barker G."/>
            <person name="Whitehead S."/>
            <person name="Kay M."/>
            <person name="Brown J."/>
            <person name="Murnane C."/>
            <person name="Gray E."/>
            <person name="Humphries M."/>
            <person name="Sycamore N."/>
            <person name="Barker D."/>
            <person name="Saunders D."/>
            <person name="Wallis J."/>
            <person name="Babbage A."/>
            <person name="Hammond S."/>
            <person name="Mashreghi-Mohammadi M."/>
            <person name="Barr L."/>
            <person name="Martin S."/>
            <person name="Wray P."/>
            <person name="Ellington A."/>
            <person name="Matthews N."/>
            <person name="Ellwood M."/>
            <person name="Woodmansey R."/>
            <person name="Clark G."/>
            <person name="Cooper J."/>
            <person name="Tromans A."/>
            <person name="Grafham D."/>
            <person name="Skuce C."/>
            <person name="Pandian R."/>
            <person name="Andrews R."/>
            <person name="Harrison E."/>
            <person name="Kimberley A."/>
            <person name="Garnett J."/>
            <person name="Fosker N."/>
            <person name="Hall R."/>
            <person name="Garner P."/>
            <person name="Kelly D."/>
            <person name="Bird C."/>
            <person name="Palmer S."/>
            <person name="Gehring I."/>
            <person name="Berger A."/>
            <person name="Dooley C.M."/>
            <person name="Ersan-Urun Z."/>
            <person name="Eser C."/>
            <person name="Geiger H."/>
            <person name="Geisler M."/>
            <person name="Karotki L."/>
            <person name="Kirn A."/>
            <person name="Konantz J."/>
            <person name="Konantz M."/>
            <person name="Oberlander M."/>
            <person name="Rudolph-Geiger S."/>
            <person name="Teucke M."/>
            <person name="Lanz C."/>
            <person name="Raddatz G."/>
            <person name="Osoegawa K."/>
            <person name="Zhu B."/>
            <person name="Rapp A."/>
            <person name="Widaa S."/>
            <person name="Langford C."/>
            <person name="Yang F."/>
            <person name="Schuster S.C."/>
            <person name="Carter N.P."/>
            <person name="Harrow J."/>
            <person name="Ning Z."/>
            <person name="Herrero J."/>
            <person name="Searle S.M."/>
            <person name="Enright A."/>
            <person name="Geisler R."/>
            <person name="Plasterk R.H."/>
            <person name="Lee C."/>
            <person name="Westerfield M."/>
            <person name="de Jong P.J."/>
            <person name="Zon L.I."/>
            <person name="Postlethwait J.H."/>
            <person name="Nusslein-Volhard C."/>
            <person name="Hubbard T.J."/>
            <person name="Roest Crollius H."/>
            <person name="Rogers J."/>
            <person name="Stemple D.L."/>
        </authorList>
    </citation>
    <scope>NUCLEOTIDE SEQUENCE [LARGE SCALE GENOMIC DNA]</scope>
    <source>
        <strain>Tuebingen</strain>
    </source>
</reference>
<reference key="3">
    <citation type="submission" date="2003-04" db="EMBL/GenBank/DDBJ databases">
        <authorList>
            <consortium name="NIH - Zebrafish Gene Collection (ZGC) project"/>
        </authorList>
    </citation>
    <scope>NUCLEOTIDE SEQUENCE [LARGE SCALE MRNA] (ISOFORM 2)</scope>
    <source>
        <strain>SJD</strain>
    </source>
</reference>
<reference key="4">
    <citation type="journal article" date="2005" name="Genetics">
        <title>Identification of zebrafish insertional mutants with defects in visual system development and function.</title>
        <authorList>
            <person name="Gross J.M."/>
            <person name="Perkins B.D."/>
            <person name="Amsterdam A."/>
            <person name="Egana A."/>
            <person name="Darland T."/>
            <person name="Matsui J.I."/>
            <person name="Sciascia S."/>
            <person name="Hopkins N."/>
            <person name="Dowling J.E."/>
        </authorList>
    </citation>
    <scope>FUNCTION</scope>
    <scope>DISRUPTION PHENOTYPE</scope>
</reference>
<dbReference type="EMBL" id="AY099529">
    <property type="protein sequence ID" value="AAM28217.1"/>
    <property type="molecule type" value="mRNA"/>
</dbReference>
<dbReference type="EMBL" id="BX511163">
    <property type="protein sequence ID" value="CAI20733.1"/>
    <property type="molecule type" value="Genomic_DNA"/>
</dbReference>
<dbReference type="EMBL" id="BC051607">
    <property type="protein sequence ID" value="AAH51607.1"/>
    <property type="molecule type" value="mRNA"/>
</dbReference>
<dbReference type="RefSeq" id="NP_775374.1">
    <molecule id="Q8JGR7-1"/>
    <property type="nucleotide sequence ID" value="NM_173267.1"/>
</dbReference>
<dbReference type="SMR" id="Q8JGR7"/>
<dbReference type="FunCoup" id="Q8JGR7">
    <property type="interactions" value="1276"/>
</dbReference>
<dbReference type="STRING" id="7955.ENSDARP00000008647"/>
<dbReference type="PaxDb" id="7955-ENSDARP00000008647"/>
<dbReference type="Ensembl" id="ENSDART00000020703">
    <molecule id="Q8JGR7-1"/>
    <property type="protein sequence ID" value="ENSDARP00000008647"/>
    <property type="gene ID" value="ENSDARG00000019300"/>
</dbReference>
<dbReference type="GeneID" id="286776"/>
<dbReference type="KEGG" id="dre:286776"/>
<dbReference type="AGR" id="ZFIN:ZDB-GENE-021220-6"/>
<dbReference type="CTD" id="25896"/>
<dbReference type="ZFIN" id="ZDB-GENE-021220-6">
    <property type="gene designation" value="ints7"/>
</dbReference>
<dbReference type="eggNOG" id="KOG1988">
    <property type="taxonomic scope" value="Eukaryota"/>
</dbReference>
<dbReference type="HOGENOM" id="CLU_112505_0_0_1"/>
<dbReference type="InParanoid" id="Q8JGR7"/>
<dbReference type="OMA" id="GITWCTG"/>
<dbReference type="OrthoDB" id="1921953at2759"/>
<dbReference type="PhylomeDB" id="Q8JGR7"/>
<dbReference type="TreeFam" id="TF106105"/>
<dbReference type="Reactome" id="R-DRE-6807505">
    <property type="pathway name" value="RNA polymerase II transcribes snRNA genes"/>
</dbReference>
<dbReference type="PRO" id="PR:Q8JGR7"/>
<dbReference type="Proteomes" id="UP000000437">
    <property type="component" value="Chromosome 20"/>
</dbReference>
<dbReference type="Bgee" id="ENSDARG00000019300">
    <property type="expression patterns" value="Expressed in ovary and 28 other cell types or tissues"/>
</dbReference>
<dbReference type="ExpressionAtlas" id="Q8JGR7">
    <property type="expression patterns" value="baseline"/>
</dbReference>
<dbReference type="GO" id="GO:0005694">
    <property type="term" value="C:chromosome"/>
    <property type="evidence" value="ECO:0007669"/>
    <property type="project" value="UniProtKB-SubCell"/>
</dbReference>
<dbReference type="GO" id="GO:0005737">
    <property type="term" value="C:cytoplasm"/>
    <property type="evidence" value="ECO:0000250"/>
    <property type="project" value="UniProtKB"/>
</dbReference>
<dbReference type="GO" id="GO:0160232">
    <property type="term" value="C:INTAC complex"/>
    <property type="evidence" value="ECO:0000250"/>
    <property type="project" value="UniProtKB"/>
</dbReference>
<dbReference type="GO" id="GO:0032039">
    <property type="term" value="C:integrator complex"/>
    <property type="evidence" value="ECO:0000250"/>
    <property type="project" value="UniProtKB"/>
</dbReference>
<dbReference type="GO" id="GO:0005634">
    <property type="term" value="C:nucleus"/>
    <property type="evidence" value="ECO:0000250"/>
    <property type="project" value="UniProtKB"/>
</dbReference>
<dbReference type="GO" id="GO:0006974">
    <property type="term" value="P:DNA damage response"/>
    <property type="evidence" value="ECO:0007669"/>
    <property type="project" value="UniProtKB-KW"/>
</dbReference>
<dbReference type="GO" id="GO:0002088">
    <property type="term" value="P:lens development in camera-type eye"/>
    <property type="evidence" value="ECO:0000315"/>
    <property type="project" value="ZFIN"/>
</dbReference>
<dbReference type="GO" id="GO:0160240">
    <property type="term" value="P:RNA polymerase II transcription initiation surveillance"/>
    <property type="evidence" value="ECO:0000250"/>
    <property type="project" value="UniProtKB"/>
</dbReference>
<dbReference type="GO" id="GO:0034472">
    <property type="term" value="P:snRNA 3'-end processing"/>
    <property type="evidence" value="ECO:0000318"/>
    <property type="project" value="GO_Central"/>
</dbReference>
<dbReference type="InterPro" id="IPR016024">
    <property type="entry name" value="ARM-type_fold"/>
</dbReference>
<dbReference type="InterPro" id="IPR033060">
    <property type="entry name" value="INTS7"/>
</dbReference>
<dbReference type="InterPro" id="IPR054519">
    <property type="entry name" value="INTS7_C"/>
</dbReference>
<dbReference type="InterPro" id="IPR056517">
    <property type="entry name" value="INTS7_HB"/>
</dbReference>
<dbReference type="InterPro" id="IPR056516">
    <property type="entry name" value="INTS7_N"/>
</dbReference>
<dbReference type="PANTHER" id="PTHR13322">
    <property type="entry name" value="C1ORF73 PROTEIN"/>
    <property type="match status" value="1"/>
</dbReference>
<dbReference type="PANTHER" id="PTHR13322:SF2">
    <property type="entry name" value="INTEGRATOR COMPLEX SUBUNIT 7"/>
    <property type="match status" value="1"/>
</dbReference>
<dbReference type="Pfam" id="PF22965">
    <property type="entry name" value="INTS7_C"/>
    <property type="match status" value="1"/>
</dbReference>
<dbReference type="Pfam" id="PF24437">
    <property type="entry name" value="INTS7_HB"/>
    <property type="match status" value="1"/>
</dbReference>
<dbReference type="Pfam" id="PF24436">
    <property type="entry name" value="INTS7_N"/>
    <property type="match status" value="1"/>
</dbReference>
<dbReference type="SUPFAM" id="SSF48371">
    <property type="entry name" value="ARM repeat"/>
    <property type="match status" value="1"/>
</dbReference>
<comment type="function">
    <text evidence="1 3 4">Component of the integrator complex, a multiprotein complex that terminates RNA polymerase II (Pol II) transcription in the promoter-proximal region of genes (By similarity). The integrator complex provides a quality checkpoint during transcription elongation by driving premature transcription termination of transcripts that are unfavorably configured for transcriptional elongation: the complex terminates transcription by (1) catalyzing dephosphorylation of the C-terminal domain (CTD) of Pol II subunit POLR2A/RPB1 and SUPT5H/SPT5, (2) degrading the exiting nascent RNA transcript via endonuclease activity and (3) promoting the release of Pol II from bound DNA (By similarity). The integrator complex is also involved in terminating the synthesis of non-coding Pol II transcripts, such as enhancer RNAs (eRNAs), small nuclear RNAs (snRNAs), telomerase RNAs and long non-coding RNAs (lncRNAs) (By similarity). Essential during embryogenesis for eye development (PubMed:12006978, PubMed:15716491).</text>
</comment>
<comment type="subunit">
    <text evidence="1">Component of the Integrator complex, composed of core subunits INTS1, INTS2, INTS3, INTS4, INTS5, INTS6, INTS7, INTS8, INTS9/RC74, INTS10, INTS11/CPSF3L, INTS12, INTS13, INTS14 and INTS15. The core complex associates with protein phosphatase 2A subunits PPP2CA and PPP2R1A, to form the Integrator-PP2A (INTAC) complex.</text>
</comment>
<comment type="subcellular location">
    <subcellularLocation>
        <location evidence="1">Nucleus</location>
    </subcellularLocation>
    <subcellularLocation>
        <location evidence="1">Chromosome</location>
    </subcellularLocation>
    <subcellularLocation>
        <location evidence="1">Cytoplasm</location>
    </subcellularLocation>
    <text evidence="1">Localizes to sites of DNA damage in a H2AX-independent manner.</text>
</comment>
<comment type="alternative products">
    <event type="alternative splicing"/>
    <isoform>
        <id>Q8JGR7-1</id>
        <name>1</name>
        <sequence type="displayed"/>
    </isoform>
    <isoform>
        <id>Q8JGR7-2</id>
        <name>2</name>
        <sequence type="described" ref="VSP_021467 VSP_021468"/>
    </isoform>
</comment>
<comment type="disruption phenotype">
    <text evidence="3 4">Fishes have a defective lens structure and abnormally shaped jaw and neurocranium.</text>
</comment>
<comment type="similarity">
    <text evidence="6">Belongs to the Integrator subunit 7 family.</text>
</comment>
<proteinExistence type="evidence at transcript level"/>
<keyword id="KW-0025">Alternative splicing</keyword>
<keyword id="KW-0158">Chromosome</keyword>
<keyword id="KW-0963">Cytoplasm</keyword>
<keyword id="KW-0217">Developmental protein</keyword>
<keyword id="KW-0227">DNA damage</keyword>
<keyword id="KW-0539">Nucleus</keyword>
<keyword id="KW-1185">Reference proteome</keyword>
<gene>
    <name type="primary">ints7</name>
    <name type="ORF">si:dkey-176n7.1</name>
</gene>
<feature type="chain" id="PRO_0000259552" description="Integrator complex subunit 7">
    <location>
        <begin position="1"/>
        <end position="964"/>
    </location>
</feature>
<feature type="region of interest" description="Disordered" evidence="2">
    <location>
        <begin position="937"/>
        <end position="964"/>
    </location>
</feature>
<feature type="compositionally biased region" description="Low complexity" evidence="2">
    <location>
        <begin position="937"/>
        <end position="958"/>
    </location>
</feature>
<feature type="splice variant" id="VSP_021467" description="In isoform 2." evidence="5">
    <original>DTPVELKLKLIPMLQHMHHDASLASC</original>
    <variation>QRNSRSFWCLWQLCYLWPVRRLSQLR</variation>
    <location>
        <begin position="188"/>
        <end position="213"/>
    </location>
</feature>
<feature type="splice variant" id="VSP_021468" description="In isoform 2." evidence="5">
    <location>
        <begin position="214"/>
        <end position="964"/>
    </location>
</feature>
<organism>
    <name type="scientific">Danio rerio</name>
    <name type="common">Zebrafish</name>
    <name type="synonym">Brachydanio rerio</name>
    <dbReference type="NCBI Taxonomy" id="7955"/>
    <lineage>
        <taxon>Eukaryota</taxon>
        <taxon>Metazoa</taxon>
        <taxon>Chordata</taxon>
        <taxon>Craniata</taxon>
        <taxon>Vertebrata</taxon>
        <taxon>Euteleostomi</taxon>
        <taxon>Actinopterygii</taxon>
        <taxon>Neopterygii</taxon>
        <taxon>Teleostei</taxon>
        <taxon>Ostariophysi</taxon>
        <taxon>Cypriniformes</taxon>
        <taxon>Danionidae</taxon>
        <taxon>Danioninae</taxon>
        <taxon>Danio</taxon>
    </lineage>
</organism>
<sequence length="964" mass="106915">MSLSAARSFLSEAAYGEQELDANSALMELDKGLRSCKLGEQCEAVVLFPKLFQKYPFPILINSAFLKLADIFRLGNNFLRLCVLKVTQLSEKHLEKILNVDEFVKRVFSVIHSNDPVARAITLRMLGSLASIIPERKNAHHSIRQSLDSHDNVEVEAAIFAAASFSSHSKDFAAGICNKISEMIQGLDTPVELKLKLIPMLQHMHHDASLASCSRELLQELVSSYPSTSMLIVTLHTFTQLATSSLVDIPEQICLLLQYLKEDPRKAVKRLSIQDLKLLAKKAPHLWTRKNIQVLCECALHTPYNSLKLGMLSVLSTLSGTIAIKQYFSPNAGDSSPAPHHTDLVKLAQECCYHSDLAVAAHGITVLTSIAAFCPEKEVIQLEQETVMGMESLILLCSQDDSKTAQATLKTALTSLVQMLKTCPHLSQSSVELLLRQLHCACDPARVLMCQALAAIATQQPVLVEGMLGDLLELFRVASHRTSEKQQELLVSLATVLFVASQASLSAEVKAVIRQQLENVANGWTVYQIARQASRMGCHDFSRELYQSLRTRVASEHFYFWLNSLMEFSQAEQCLSGLEDGDYSAAMSAISEALKSYQKGIASLTAASTPLSPLTFQCEFVKLRIDTLQALSQLICTCNSLKTSPPPAIATTIALSSGSDLQRCGRISTQMKFSMDEFRSLAARYADLYQSSFDADYATLRNVELQQQSCLLVSYVIEALIIDPQTASFQEFGTHGSILAESEYELRMMAVFNHVLEEVENLSRKHPPVSYLHTGCLCDTVIAILKIPLSFQRYFFQKLQSTSIKLALSPSPRTPNEPIPVQNNQQLTLKVEGVIQHGSSPGLFRKIQAVCLKVSSTLQTKPGSDFKIPLESKTNEIEQKVEPHNDYFSTQFLLNFSILGTHQVSVEASVVDTSGIEWKTGPKNTVSVKSLEDPYSQQLRHQLQQQQQNVPQPAAQRNISTRFQ</sequence>
<name>INT7_DANRE</name>
<evidence type="ECO:0000250" key="1">
    <source>
        <dbReference type="UniProtKB" id="Q9NVH2"/>
    </source>
</evidence>
<evidence type="ECO:0000256" key="2">
    <source>
        <dbReference type="SAM" id="MobiDB-lite"/>
    </source>
</evidence>
<evidence type="ECO:0000269" key="3">
    <source>
    </source>
</evidence>
<evidence type="ECO:0000269" key="4">
    <source>
    </source>
</evidence>
<evidence type="ECO:0000303" key="5">
    <source ref="3"/>
</evidence>
<evidence type="ECO:0000305" key="6"/>
<protein>
    <recommendedName>
        <fullName>Integrator complex subunit 7</fullName>
        <shortName>Int7</shortName>
    </recommendedName>
</protein>